<dbReference type="EC" id="1.10.3.11" evidence="2"/>
<dbReference type="EMBL" id="AB004813">
    <property type="protein sequence ID" value="BAA28772.1"/>
    <property type="molecule type" value="Genomic_DNA"/>
</dbReference>
<dbReference type="EMBL" id="AB004864">
    <property type="protein sequence ID" value="BAA28773.1"/>
    <property type="molecule type" value="mRNA"/>
</dbReference>
<dbReference type="EMBL" id="AL606683">
    <property type="protein sequence ID" value="CAD41813.2"/>
    <property type="molecule type" value="Genomic_DNA"/>
</dbReference>
<dbReference type="EMBL" id="AP008210">
    <property type="protein sequence ID" value="BAF15672.1"/>
    <property type="molecule type" value="Genomic_DNA"/>
</dbReference>
<dbReference type="EMBL" id="AP014960">
    <property type="protein sequence ID" value="BAS90831.1"/>
    <property type="molecule type" value="Genomic_DNA"/>
</dbReference>
<dbReference type="EMBL" id="CM000141">
    <property type="protein sequence ID" value="EAZ31867.1"/>
    <property type="molecule type" value="Genomic_DNA"/>
</dbReference>
<dbReference type="EMBL" id="AK064040">
    <property type="protein sequence ID" value="BAG88978.1"/>
    <property type="molecule type" value="mRNA"/>
</dbReference>
<dbReference type="RefSeq" id="XP_015635413.1">
    <property type="nucleotide sequence ID" value="XM_015779927.1"/>
</dbReference>
<dbReference type="SMR" id="O82807"/>
<dbReference type="FunCoup" id="O82807">
    <property type="interactions" value="179"/>
</dbReference>
<dbReference type="STRING" id="39947.O82807"/>
<dbReference type="PaxDb" id="39947-O82807"/>
<dbReference type="EnsemblPlants" id="Os04t0600200-01">
    <property type="protein sequence ID" value="Os04t0600200-01"/>
    <property type="gene ID" value="Os04g0600200"/>
</dbReference>
<dbReference type="Gramene" id="Os04t0600200-01">
    <property type="protein sequence ID" value="Os04t0600200-01"/>
    <property type="gene ID" value="Os04g0600200"/>
</dbReference>
<dbReference type="KEGG" id="dosa:Os04g0600200"/>
<dbReference type="eggNOG" id="ENOG502QSB5">
    <property type="taxonomic scope" value="Eukaryota"/>
</dbReference>
<dbReference type="HOGENOM" id="CLU_041974_0_1_1"/>
<dbReference type="InParanoid" id="O82807"/>
<dbReference type="OMA" id="DKMAFWT"/>
<dbReference type="OrthoDB" id="16906at2759"/>
<dbReference type="Proteomes" id="UP000000763">
    <property type="component" value="Chromosome 4"/>
</dbReference>
<dbReference type="Proteomes" id="UP000007752">
    <property type="component" value="Chromosome 4"/>
</dbReference>
<dbReference type="Proteomes" id="UP000059680">
    <property type="component" value="Chromosome 4"/>
</dbReference>
<dbReference type="GO" id="GO:0005743">
    <property type="term" value="C:mitochondrial inner membrane"/>
    <property type="evidence" value="ECO:0007669"/>
    <property type="project" value="UniProtKB-SubCell"/>
</dbReference>
<dbReference type="GO" id="GO:0005739">
    <property type="term" value="C:mitochondrion"/>
    <property type="evidence" value="ECO:0000318"/>
    <property type="project" value="GO_Central"/>
</dbReference>
<dbReference type="GO" id="GO:0009916">
    <property type="term" value="F:alternative oxidase activity"/>
    <property type="evidence" value="ECO:0000318"/>
    <property type="project" value="GO_Central"/>
</dbReference>
<dbReference type="GO" id="GO:0046872">
    <property type="term" value="F:metal ion binding"/>
    <property type="evidence" value="ECO:0007669"/>
    <property type="project" value="UniProtKB-KW"/>
</dbReference>
<dbReference type="GO" id="GO:0106292">
    <property type="term" value="F:superoxide-generating NADPH oxidase activity"/>
    <property type="evidence" value="ECO:0007669"/>
    <property type="project" value="UniProtKB-ARBA"/>
</dbReference>
<dbReference type="GO" id="GO:0102721">
    <property type="term" value="F:ubiquinol:oxygen oxidoreductase activity"/>
    <property type="evidence" value="ECO:0007669"/>
    <property type="project" value="UniProtKB-EC"/>
</dbReference>
<dbReference type="GO" id="GO:0010230">
    <property type="term" value="P:alternative respiration"/>
    <property type="evidence" value="ECO:0000318"/>
    <property type="project" value="GO_Central"/>
</dbReference>
<dbReference type="CDD" id="cd01053">
    <property type="entry name" value="AOX"/>
    <property type="match status" value="1"/>
</dbReference>
<dbReference type="FunFam" id="1.20.1260.140:FF:000001">
    <property type="entry name" value="Ubiquinol oxidase"/>
    <property type="match status" value="1"/>
</dbReference>
<dbReference type="Gene3D" id="1.20.1260.140">
    <property type="entry name" value="Alternative oxidase"/>
    <property type="match status" value="1"/>
</dbReference>
<dbReference type="InterPro" id="IPR002680">
    <property type="entry name" value="AOX"/>
</dbReference>
<dbReference type="InterPro" id="IPR038659">
    <property type="entry name" value="AOX_sf"/>
</dbReference>
<dbReference type="PANTHER" id="PTHR31803">
    <property type="entry name" value="ALTERNATIVE OXIDASE"/>
    <property type="match status" value="1"/>
</dbReference>
<dbReference type="PANTHER" id="PTHR31803:SF3">
    <property type="entry name" value="ALTERNATIVE OXIDASE"/>
    <property type="match status" value="1"/>
</dbReference>
<dbReference type="Pfam" id="PF01786">
    <property type="entry name" value="AOX"/>
    <property type="match status" value="1"/>
</dbReference>
<sequence>MSSRMAGSAILRHVGGVRLFTASATSPAAAAAAAARPFLAGGEAVPGVWGLRLMSTSSVASTEAAAKAEAKKADAEKEVVVNSYWGIEQSKKLVREDGTEWKWSCFRPWETYTADTSIDLTKHHVPKTLLDKIAYWTVKSLRFPTDIFFQRRYGCRAMMLETVAAVPGMVGGMLLHLRSLRRFEQSGGWIRTLLEEAENERMHLMTFMEVANPKWYERALVITVQGVFFNAYFLGYLLSPKFAHRVVGYLEEEAIHSYTEFLKDLEAGKIDNVPAPAIAIDYWRLPANATLKDVVTVVRADEAHHRDVNHFASDIHYQGMELKQTPAPIGYH</sequence>
<gene>
    <name evidence="10" type="primary">AOX1A</name>
    <name evidence="11" type="synonym">AOX1</name>
    <name evidence="13" type="ordered locus">Os04g0600200</name>
    <name evidence="12" type="ordered locus">LOC_Os04g51150</name>
    <name evidence="15" type="ORF">OsJ_16032</name>
    <name evidence="14" type="ORF">OSJNBa0083N12.11</name>
</gene>
<proteinExistence type="evidence at transcript level"/>
<comment type="function">
    <text evidence="2">Catalyzes the cyanide-resistant oxidation of ubiquinol and the reduction of molecular oxygen to water, but does not translocate protons and consequently is not linked to oxidative phosphorylation. May increase respiration when the cytochrome respiratory pathway is restricted, or in response to low temperatures.</text>
</comment>
<comment type="catalytic activity">
    <reaction evidence="2">
        <text>2 a ubiquinol + O2 = 2 a ubiquinone + 2 H2O</text>
        <dbReference type="Rhea" id="RHEA:30255"/>
        <dbReference type="Rhea" id="RHEA-COMP:9565"/>
        <dbReference type="Rhea" id="RHEA-COMP:9566"/>
        <dbReference type="ChEBI" id="CHEBI:15377"/>
        <dbReference type="ChEBI" id="CHEBI:15379"/>
        <dbReference type="ChEBI" id="CHEBI:16389"/>
        <dbReference type="ChEBI" id="CHEBI:17976"/>
        <dbReference type="EC" id="1.10.3.11"/>
    </reaction>
</comment>
<comment type="cofactor">
    <cofactor evidence="2">
        <name>Fe cation</name>
        <dbReference type="ChEBI" id="CHEBI:24875"/>
    </cofactor>
    <text evidence="2">Binds 2 iron ions per subunit.</text>
</comment>
<comment type="subunit">
    <text evidence="3">Homodimer; disulfide-linked.</text>
</comment>
<comment type="subcellular location">
    <subcellularLocation>
        <location evidence="12">Mitochondrion inner membrane</location>
        <topology evidence="4">Multi-pass membrane protein</topology>
    </subcellularLocation>
</comment>
<comment type="tissue specificity">
    <text evidence="7">Expressed in roots, leaf sheaths and leaf blades.</text>
</comment>
<comment type="developmental stage">
    <text evidence="9">Expressed in anthers at the uninucleate microspore stage and the bicellular pollen stage.</text>
</comment>
<comment type="induction">
    <text evidence="5 6 7 8">Induced by cold (PubMed:12012245, PubMed:12036102, PubMed:22994594). Induced by drought and salt stresses, heat shock, hydrogen peroxide and methyl viologen (PubMed:22994594). Down-regulated under oxygen deprivation (PubMed:10767423).</text>
</comment>
<comment type="similarity">
    <text evidence="12">Belongs to the alternative oxidase family.</text>
</comment>
<feature type="transit peptide" description="Mitochondrion" evidence="4">
    <location>
        <begin position="1"/>
        <end position="54"/>
    </location>
</feature>
<feature type="chain" id="PRO_0000440570" description="Ubiquinol oxidase 1a, mitochondrial">
    <location>
        <begin position="55"/>
        <end position="332"/>
    </location>
</feature>
<feature type="transmembrane region" description="Helical" evidence="4">
    <location>
        <begin position="157"/>
        <end position="177"/>
    </location>
</feature>
<feature type="transmembrane region" description="Helical" evidence="4">
    <location>
        <begin position="219"/>
        <end position="239"/>
    </location>
</feature>
<feature type="binding site" evidence="1">
    <location>
        <position position="161"/>
    </location>
    <ligand>
        <name>Fe cation</name>
        <dbReference type="ChEBI" id="CHEBI:24875"/>
        <label>1</label>
    </ligand>
</feature>
<feature type="binding site" evidence="1">
    <location>
        <position position="200"/>
    </location>
    <ligand>
        <name>Fe cation</name>
        <dbReference type="ChEBI" id="CHEBI:24875"/>
        <label>1</label>
    </ligand>
</feature>
<feature type="binding site" evidence="1">
    <location>
        <position position="200"/>
    </location>
    <ligand>
        <name>Fe cation</name>
        <dbReference type="ChEBI" id="CHEBI:24875"/>
        <label>2</label>
    </ligand>
</feature>
<feature type="binding site" evidence="1">
    <location>
        <position position="203"/>
    </location>
    <ligand>
        <name>Fe cation</name>
        <dbReference type="ChEBI" id="CHEBI:24875"/>
        <label>1</label>
    </ligand>
</feature>
<feature type="binding site" evidence="1">
    <location>
        <position position="251"/>
    </location>
    <ligand>
        <name>Fe cation</name>
        <dbReference type="ChEBI" id="CHEBI:24875"/>
        <label>2</label>
    </ligand>
</feature>
<feature type="binding site" evidence="1">
    <location>
        <position position="302"/>
    </location>
    <ligand>
        <name>Fe cation</name>
        <dbReference type="ChEBI" id="CHEBI:24875"/>
        <label>1</label>
    </ligand>
</feature>
<feature type="binding site" evidence="1">
    <location>
        <position position="302"/>
    </location>
    <ligand>
        <name>Fe cation</name>
        <dbReference type="ChEBI" id="CHEBI:24875"/>
        <label>2</label>
    </ligand>
</feature>
<feature type="binding site" evidence="1">
    <location>
        <position position="305"/>
    </location>
    <ligand>
        <name>Fe cation</name>
        <dbReference type="ChEBI" id="CHEBI:24875"/>
        <label>2</label>
    </ligand>
</feature>
<feature type="disulfide bond" description="Interchain" evidence="3">
    <location>
        <position position="105"/>
    </location>
</feature>
<reference key="1">
    <citation type="journal article" date="1997" name="Gene">
        <title>Transcript levels of tandem-arranged alternative oxidase genes in rice are increased by low temperature.</title>
        <authorList>
            <person name="Ito Y."/>
            <person name="Saisho D."/>
            <person name="Nakazono M."/>
            <person name="Tsutsumi N."/>
            <person name="Hirai A."/>
        </authorList>
    </citation>
    <scope>NUCLEOTIDE SEQUENCE [GENOMIC DNA / MRNA]</scope>
    <source>
        <strain>cv. Nipponbare</strain>
    </source>
</reference>
<reference key="2">
    <citation type="journal article" date="2002" name="Nature">
        <title>Sequence and analysis of rice chromosome 4.</title>
        <authorList>
            <person name="Feng Q."/>
            <person name="Zhang Y."/>
            <person name="Hao P."/>
            <person name="Wang S."/>
            <person name="Fu G."/>
            <person name="Huang Y."/>
            <person name="Li Y."/>
            <person name="Zhu J."/>
            <person name="Liu Y."/>
            <person name="Hu X."/>
            <person name="Jia P."/>
            <person name="Zhang Y."/>
            <person name="Zhao Q."/>
            <person name="Ying K."/>
            <person name="Yu S."/>
            <person name="Tang Y."/>
            <person name="Weng Q."/>
            <person name="Zhang L."/>
            <person name="Lu Y."/>
            <person name="Mu J."/>
            <person name="Lu Y."/>
            <person name="Zhang L.S."/>
            <person name="Yu Z."/>
            <person name="Fan D."/>
            <person name="Liu X."/>
            <person name="Lu T."/>
            <person name="Li C."/>
            <person name="Wu Y."/>
            <person name="Sun T."/>
            <person name="Lei H."/>
            <person name="Li T."/>
            <person name="Hu H."/>
            <person name="Guan J."/>
            <person name="Wu M."/>
            <person name="Zhang R."/>
            <person name="Zhou B."/>
            <person name="Chen Z."/>
            <person name="Chen L."/>
            <person name="Jin Z."/>
            <person name="Wang R."/>
            <person name="Yin H."/>
            <person name="Cai Z."/>
            <person name="Ren S."/>
            <person name="Lv G."/>
            <person name="Gu W."/>
            <person name="Zhu G."/>
            <person name="Tu Y."/>
            <person name="Jia J."/>
            <person name="Zhang Y."/>
            <person name="Chen J."/>
            <person name="Kang H."/>
            <person name="Chen X."/>
            <person name="Shao C."/>
            <person name="Sun Y."/>
            <person name="Hu Q."/>
            <person name="Zhang X."/>
            <person name="Zhang W."/>
            <person name="Wang L."/>
            <person name="Ding C."/>
            <person name="Sheng H."/>
            <person name="Gu J."/>
            <person name="Chen S."/>
            <person name="Ni L."/>
            <person name="Zhu F."/>
            <person name="Chen W."/>
            <person name="Lan L."/>
            <person name="Lai Y."/>
            <person name="Cheng Z."/>
            <person name="Gu M."/>
            <person name="Jiang J."/>
            <person name="Li J."/>
            <person name="Hong G."/>
            <person name="Xue Y."/>
            <person name="Han B."/>
        </authorList>
    </citation>
    <scope>NUCLEOTIDE SEQUENCE [LARGE SCALE GENOMIC DNA]</scope>
    <source>
        <strain>cv. Nipponbare</strain>
    </source>
</reference>
<reference key="3">
    <citation type="journal article" date="2005" name="Nature">
        <title>The map-based sequence of the rice genome.</title>
        <authorList>
            <consortium name="International rice genome sequencing project (IRGSP)"/>
        </authorList>
    </citation>
    <scope>NUCLEOTIDE SEQUENCE [LARGE SCALE GENOMIC DNA]</scope>
    <source>
        <strain>cv. Nipponbare</strain>
    </source>
</reference>
<reference key="4">
    <citation type="journal article" date="2008" name="Nucleic Acids Res.">
        <title>The rice annotation project database (RAP-DB): 2008 update.</title>
        <authorList>
            <consortium name="The rice annotation project (RAP)"/>
        </authorList>
    </citation>
    <scope>GENOME REANNOTATION</scope>
    <source>
        <strain>cv. Nipponbare</strain>
    </source>
</reference>
<reference key="5">
    <citation type="journal article" date="2013" name="Rice">
        <title>Improvement of the Oryza sativa Nipponbare reference genome using next generation sequence and optical map data.</title>
        <authorList>
            <person name="Kawahara Y."/>
            <person name="de la Bastide M."/>
            <person name="Hamilton J.P."/>
            <person name="Kanamori H."/>
            <person name="McCombie W.R."/>
            <person name="Ouyang S."/>
            <person name="Schwartz D.C."/>
            <person name="Tanaka T."/>
            <person name="Wu J."/>
            <person name="Zhou S."/>
            <person name="Childs K.L."/>
            <person name="Davidson R.M."/>
            <person name="Lin H."/>
            <person name="Quesada-Ocampo L."/>
            <person name="Vaillancourt B."/>
            <person name="Sakai H."/>
            <person name="Lee S.S."/>
            <person name="Kim J."/>
            <person name="Numa H."/>
            <person name="Itoh T."/>
            <person name="Buell C.R."/>
            <person name="Matsumoto T."/>
        </authorList>
    </citation>
    <scope>GENOME REANNOTATION</scope>
    <source>
        <strain>cv. Nipponbare</strain>
    </source>
</reference>
<reference key="6">
    <citation type="journal article" date="2005" name="PLoS Biol.">
        <title>The genomes of Oryza sativa: a history of duplications.</title>
        <authorList>
            <person name="Yu J."/>
            <person name="Wang J."/>
            <person name="Lin W."/>
            <person name="Li S."/>
            <person name="Li H."/>
            <person name="Zhou J."/>
            <person name="Ni P."/>
            <person name="Dong W."/>
            <person name="Hu S."/>
            <person name="Zeng C."/>
            <person name="Zhang J."/>
            <person name="Zhang Y."/>
            <person name="Li R."/>
            <person name="Xu Z."/>
            <person name="Li S."/>
            <person name="Li X."/>
            <person name="Zheng H."/>
            <person name="Cong L."/>
            <person name="Lin L."/>
            <person name="Yin J."/>
            <person name="Geng J."/>
            <person name="Li G."/>
            <person name="Shi J."/>
            <person name="Liu J."/>
            <person name="Lv H."/>
            <person name="Li J."/>
            <person name="Wang J."/>
            <person name="Deng Y."/>
            <person name="Ran L."/>
            <person name="Shi X."/>
            <person name="Wang X."/>
            <person name="Wu Q."/>
            <person name="Li C."/>
            <person name="Ren X."/>
            <person name="Wang J."/>
            <person name="Wang X."/>
            <person name="Li D."/>
            <person name="Liu D."/>
            <person name="Zhang X."/>
            <person name="Ji Z."/>
            <person name="Zhao W."/>
            <person name="Sun Y."/>
            <person name="Zhang Z."/>
            <person name="Bao J."/>
            <person name="Han Y."/>
            <person name="Dong L."/>
            <person name="Ji J."/>
            <person name="Chen P."/>
            <person name="Wu S."/>
            <person name="Liu J."/>
            <person name="Xiao Y."/>
            <person name="Bu D."/>
            <person name="Tan J."/>
            <person name="Yang L."/>
            <person name="Ye C."/>
            <person name="Zhang J."/>
            <person name="Xu J."/>
            <person name="Zhou Y."/>
            <person name="Yu Y."/>
            <person name="Zhang B."/>
            <person name="Zhuang S."/>
            <person name="Wei H."/>
            <person name="Liu B."/>
            <person name="Lei M."/>
            <person name="Yu H."/>
            <person name="Li Y."/>
            <person name="Xu H."/>
            <person name="Wei S."/>
            <person name="He X."/>
            <person name="Fang L."/>
            <person name="Zhang Z."/>
            <person name="Zhang Y."/>
            <person name="Huang X."/>
            <person name="Su Z."/>
            <person name="Tong W."/>
            <person name="Li J."/>
            <person name="Tong Z."/>
            <person name="Li S."/>
            <person name="Ye J."/>
            <person name="Wang L."/>
            <person name="Fang L."/>
            <person name="Lei T."/>
            <person name="Chen C.-S."/>
            <person name="Chen H.-C."/>
            <person name="Xu Z."/>
            <person name="Li H."/>
            <person name="Huang H."/>
            <person name="Zhang F."/>
            <person name="Xu H."/>
            <person name="Li N."/>
            <person name="Zhao C."/>
            <person name="Li S."/>
            <person name="Dong L."/>
            <person name="Huang Y."/>
            <person name="Li L."/>
            <person name="Xi Y."/>
            <person name="Qi Q."/>
            <person name="Li W."/>
            <person name="Zhang B."/>
            <person name="Hu W."/>
            <person name="Zhang Y."/>
            <person name="Tian X."/>
            <person name="Jiao Y."/>
            <person name="Liang X."/>
            <person name="Jin J."/>
            <person name="Gao L."/>
            <person name="Zheng W."/>
            <person name="Hao B."/>
            <person name="Liu S.-M."/>
            <person name="Wang W."/>
            <person name="Yuan L."/>
            <person name="Cao M."/>
            <person name="McDermott J."/>
            <person name="Samudrala R."/>
            <person name="Wang J."/>
            <person name="Wong G.K.-S."/>
            <person name="Yang H."/>
        </authorList>
    </citation>
    <scope>NUCLEOTIDE SEQUENCE [LARGE SCALE GENOMIC DNA]</scope>
    <source>
        <strain>cv. Nipponbare</strain>
    </source>
</reference>
<reference key="7">
    <citation type="journal article" date="2003" name="Science">
        <title>Collection, mapping, and annotation of over 28,000 cDNA clones from japonica rice.</title>
        <authorList>
            <consortium name="The rice full-length cDNA consortium"/>
        </authorList>
    </citation>
    <scope>NUCLEOTIDE SEQUENCE [LARGE SCALE MRNA]</scope>
    <source>
        <strain>cv. Nipponbare</strain>
    </source>
</reference>
<reference key="8">
    <citation type="journal article" date="1997" name="Sex. Plant Reprod.">
        <title>Isolation of a cDNA clone encoding the alternative oxidase expressed in rice anthers.</title>
        <authorList>
            <person name="Abe F."/>
            <person name="Kitashiba H."/>
            <person name="Kishitani S."/>
            <person name="Toriyama K."/>
        </authorList>
        <dbReference type="AGRICOLA" id="IND21238861"/>
    </citation>
    <scope>DEVELOPMENTAL STAGE</scope>
    <source>
        <strain>cv. Hayayuki</strain>
        <tissue>Anther</tissue>
    </source>
</reference>
<reference key="9">
    <citation type="journal article" date="2000" name="FEBS Lett.">
        <title>Transcript levels of the nuclear-encoded respiratory genes in rice decrease by oxygen deprivation: evidence for involvement of calcium in expression of the alternative oxidase 1a gene.</title>
        <authorList>
            <person name="Tsuji H."/>
            <person name="Nakazono M."/>
            <person name="Saisho D."/>
            <person name="Tsutsumi N."/>
            <person name="Hirai A."/>
        </authorList>
    </citation>
    <scope>INDUCTION</scope>
</reference>
<reference key="10">
    <citation type="journal article" date="2002" name="Genes Genet. Syst.">
        <title>AOX1c, a novel rice gene for alternative oxidase; comparison with rice AOX1a and AOX1b.</title>
        <authorList>
            <person name="Saika H."/>
            <person name="Ohtsu K."/>
            <person name="Hamanaka S."/>
            <person name="Nakazono M."/>
            <person name="Tsutsumi N."/>
            <person name="Hirai A."/>
        </authorList>
    </citation>
    <scope>TISSUE SPECIFICITY</scope>
    <scope>INDUCTION BY COLD</scope>
</reference>
<reference key="11">
    <citation type="journal article" date="2002" name="Planta">
        <title>Two uncoupling protein genes of rice (Oryza sativa L.): molecular study reveals the defects in the pre-mRNA processing for the heat-generating proteins of the subtropical cereal.</title>
        <authorList>
            <person name="Watanabe A."/>
            <person name="Hirai A."/>
        </authorList>
    </citation>
    <scope>INDUCTION BY COLD</scope>
</reference>
<reference key="12">
    <citation type="journal article" date="2013" name="Plant Cell Environ.">
        <title>Unravelling mitochondrial retrograde regulation in the abiotic stress induction of rice ALTERNATIVE OXIDASE 1 genes.</title>
        <authorList>
            <person name="Li C.R."/>
            <person name="Liang D.D."/>
            <person name="Li J."/>
            <person name="Duan Y.B."/>
            <person name="Li H."/>
            <person name="Yang Y.C."/>
            <person name="Qin R.Y."/>
            <person name="Li L."/>
            <person name="Wei P.C."/>
            <person name="Yang J.B."/>
        </authorList>
    </citation>
    <scope>INDUCTION</scope>
</reference>
<keyword id="KW-1015">Disulfide bond</keyword>
<keyword id="KW-0249">Electron transport</keyword>
<keyword id="KW-0408">Iron</keyword>
<keyword id="KW-0472">Membrane</keyword>
<keyword id="KW-0479">Metal-binding</keyword>
<keyword id="KW-0496">Mitochondrion</keyword>
<keyword id="KW-0999">Mitochondrion inner membrane</keyword>
<keyword id="KW-0560">Oxidoreductase</keyword>
<keyword id="KW-1185">Reference proteome</keyword>
<keyword id="KW-0679">Respiratory chain</keyword>
<keyword id="KW-0809">Transit peptide</keyword>
<keyword id="KW-0812">Transmembrane</keyword>
<keyword id="KW-1133">Transmembrane helix</keyword>
<keyword id="KW-0813">Transport</keyword>
<name>AOX1A_ORYSJ</name>
<evidence type="ECO:0000250" key="1">
    <source>
        <dbReference type="UniProtKB" id="Q26710"/>
    </source>
</evidence>
<evidence type="ECO:0000250" key="2">
    <source>
        <dbReference type="UniProtKB" id="Q39219"/>
    </source>
</evidence>
<evidence type="ECO:0000250" key="3">
    <source>
        <dbReference type="UniProtKB" id="Q41224"/>
    </source>
</evidence>
<evidence type="ECO:0000255" key="4"/>
<evidence type="ECO:0000269" key="5">
    <source>
    </source>
</evidence>
<evidence type="ECO:0000269" key="6">
    <source>
    </source>
</evidence>
<evidence type="ECO:0000269" key="7">
    <source>
    </source>
</evidence>
<evidence type="ECO:0000269" key="8">
    <source>
    </source>
</evidence>
<evidence type="ECO:0000269" key="9">
    <source ref="8"/>
</evidence>
<evidence type="ECO:0000303" key="10">
    <source>
    </source>
</evidence>
<evidence type="ECO:0000303" key="11">
    <source ref="8"/>
</evidence>
<evidence type="ECO:0000305" key="12"/>
<evidence type="ECO:0000312" key="13">
    <source>
        <dbReference type="EMBL" id="BAF15672.1"/>
    </source>
</evidence>
<evidence type="ECO:0000312" key="14">
    <source>
        <dbReference type="EMBL" id="CAD41813.2"/>
    </source>
</evidence>
<evidence type="ECO:0000312" key="15">
    <source>
        <dbReference type="EMBL" id="EAZ31867.1"/>
    </source>
</evidence>
<organism>
    <name type="scientific">Oryza sativa subsp. japonica</name>
    <name type="common">Rice</name>
    <dbReference type="NCBI Taxonomy" id="39947"/>
    <lineage>
        <taxon>Eukaryota</taxon>
        <taxon>Viridiplantae</taxon>
        <taxon>Streptophyta</taxon>
        <taxon>Embryophyta</taxon>
        <taxon>Tracheophyta</taxon>
        <taxon>Spermatophyta</taxon>
        <taxon>Magnoliopsida</taxon>
        <taxon>Liliopsida</taxon>
        <taxon>Poales</taxon>
        <taxon>Poaceae</taxon>
        <taxon>BOP clade</taxon>
        <taxon>Oryzoideae</taxon>
        <taxon>Oryzeae</taxon>
        <taxon>Oryzinae</taxon>
        <taxon>Oryza</taxon>
        <taxon>Oryza sativa</taxon>
    </lineage>
</organism>
<protein>
    <recommendedName>
        <fullName evidence="12">Ubiquinol oxidase 1a, mitochondrial</fullName>
        <ecNumber evidence="2">1.10.3.11</ecNumber>
    </recommendedName>
    <alternativeName>
        <fullName evidence="10">Alternative oxidase 1a</fullName>
        <shortName evidence="10">OsAOX1A</shortName>
    </alternativeName>
</protein>
<accession>O82807</accession>